<organism>
    <name type="scientific">Bacillus cereus (strain 03BB102)</name>
    <dbReference type="NCBI Taxonomy" id="572264"/>
    <lineage>
        <taxon>Bacteria</taxon>
        <taxon>Bacillati</taxon>
        <taxon>Bacillota</taxon>
        <taxon>Bacilli</taxon>
        <taxon>Bacillales</taxon>
        <taxon>Bacillaceae</taxon>
        <taxon>Bacillus</taxon>
        <taxon>Bacillus cereus group</taxon>
    </lineage>
</organism>
<accession>C1EN36</accession>
<name>PANB_BACC3</name>
<dbReference type="EC" id="2.1.2.11" evidence="1"/>
<dbReference type="EMBL" id="CP001407">
    <property type="protein sequence ID" value="ACO26374.1"/>
    <property type="molecule type" value="Genomic_DNA"/>
</dbReference>
<dbReference type="RefSeq" id="WP_000851103.1">
    <property type="nucleotide sequence ID" value="NZ_CP009318.1"/>
</dbReference>
<dbReference type="SMR" id="C1EN36"/>
<dbReference type="GeneID" id="45021534"/>
<dbReference type="KEGG" id="bcx:BCA_1598"/>
<dbReference type="PATRIC" id="fig|572264.18.peg.1546"/>
<dbReference type="UniPathway" id="UPA00028">
    <property type="reaction ID" value="UER00003"/>
</dbReference>
<dbReference type="Proteomes" id="UP000002210">
    <property type="component" value="Chromosome"/>
</dbReference>
<dbReference type="GO" id="GO:0005737">
    <property type="term" value="C:cytoplasm"/>
    <property type="evidence" value="ECO:0007669"/>
    <property type="project" value="UniProtKB-SubCell"/>
</dbReference>
<dbReference type="GO" id="GO:0003864">
    <property type="term" value="F:3-methyl-2-oxobutanoate hydroxymethyltransferase activity"/>
    <property type="evidence" value="ECO:0007669"/>
    <property type="project" value="UniProtKB-UniRule"/>
</dbReference>
<dbReference type="GO" id="GO:0000287">
    <property type="term" value="F:magnesium ion binding"/>
    <property type="evidence" value="ECO:0007669"/>
    <property type="project" value="TreeGrafter"/>
</dbReference>
<dbReference type="GO" id="GO:0015940">
    <property type="term" value="P:pantothenate biosynthetic process"/>
    <property type="evidence" value="ECO:0007669"/>
    <property type="project" value="UniProtKB-UniRule"/>
</dbReference>
<dbReference type="CDD" id="cd06557">
    <property type="entry name" value="KPHMT-like"/>
    <property type="match status" value="1"/>
</dbReference>
<dbReference type="FunFam" id="3.20.20.60:FF:000003">
    <property type="entry name" value="3-methyl-2-oxobutanoate hydroxymethyltransferase"/>
    <property type="match status" value="1"/>
</dbReference>
<dbReference type="Gene3D" id="3.20.20.60">
    <property type="entry name" value="Phosphoenolpyruvate-binding domains"/>
    <property type="match status" value="1"/>
</dbReference>
<dbReference type="HAMAP" id="MF_00156">
    <property type="entry name" value="PanB"/>
    <property type="match status" value="1"/>
</dbReference>
<dbReference type="InterPro" id="IPR003700">
    <property type="entry name" value="Pantoate_hydroxy_MeTrfase"/>
</dbReference>
<dbReference type="InterPro" id="IPR015813">
    <property type="entry name" value="Pyrv/PenolPyrv_kinase-like_dom"/>
</dbReference>
<dbReference type="InterPro" id="IPR040442">
    <property type="entry name" value="Pyrv_kinase-like_dom_sf"/>
</dbReference>
<dbReference type="NCBIfam" id="TIGR00222">
    <property type="entry name" value="panB"/>
    <property type="match status" value="1"/>
</dbReference>
<dbReference type="NCBIfam" id="NF001452">
    <property type="entry name" value="PRK00311.1"/>
    <property type="match status" value="1"/>
</dbReference>
<dbReference type="PANTHER" id="PTHR20881">
    <property type="entry name" value="3-METHYL-2-OXOBUTANOATE HYDROXYMETHYLTRANSFERASE"/>
    <property type="match status" value="1"/>
</dbReference>
<dbReference type="PANTHER" id="PTHR20881:SF0">
    <property type="entry name" value="3-METHYL-2-OXOBUTANOATE HYDROXYMETHYLTRANSFERASE"/>
    <property type="match status" value="1"/>
</dbReference>
<dbReference type="Pfam" id="PF02548">
    <property type="entry name" value="Pantoate_transf"/>
    <property type="match status" value="1"/>
</dbReference>
<dbReference type="PIRSF" id="PIRSF000388">
    <property type="entry name" value="Pantoate_hydroxy_MeTrfase"/>
    <property type="match status" value="1"/>
</dbReference>
<dbReference type="SUPFAM" id="SSF51621">
    <property type="entry name" value="Phosphoenolpyruvate/pyruvate domain"/>
    <property type="match status" value="1"/>
</dbReference>
<proteinExistence type="inferred from homology"/>
<protein>
    <recommendedName>
        <fullName evidence="1">3-methyl-2-oxobutanoate hydroxymethyltransferase</fullName>
        <ecNumber evidence="1">2.1.2.11</ecNumber>
    </recommendedName>
    <alternativeName>
        <fullName evidence="1">Ketopantoate hydroxymethyltransferase</fullName>
        <shortName evidence="1">KPHMT</shortName>
    </alternativeName>
</protein>
<comment type="function">
    <text evidence="1">Catalyzes the reversible reaction in which hydroxymethyl group from 5,10-methylenetetrahydrofolate is transferred onto alpha-ketoisovalerate to form ketopantoate.</text>
</comment>
<comment type="catalytic activity">
    <reaction evidence="1">
        <text>3-methyl-2-oxobutanoate + (6R)-5,10-methylene-5,6,7,8-tetrahydrofolate + H2O = 2-dehydropantoate + (6S)-5,6,7,8-tetrahydrofolate</text>
        <dbReference type="Rhea" id="RHEA:11824"/>
        <dbReference type="ChEBI" id="CHEBI:11561"/>
        <dbReference type="ChEBI" id="CHEBI:11851"/>
        <dbReference type="ChEBI" id="CHEBI:15377"/>
        <dbReference type="ChEBI" id="CHEBI:15636"/>
        <dbReference type="ChEBI" id="CHEBI:57453"/>
        <dbReference type="EC" id="2.1.2.11"/>
    </reaction>
</comment>
<comment type="cofactor">
    <cofactor evidence="1">
        <name>Mg(2+)</name>
        <dbReference type="ChEBI" id="CHEBI:18420"/>
    </cofactor>
    <text evidence="1">Binds 1 Mg(2+) ion per subunit.</text>
</comment>
<comment type="pathway">
    <text evidence="1">Cofactor biosynthesis; (R)-pantothenate biosynthesis; (R)-pantoate from 3-methyl-2-oxobutanoate: step 1/2.</text>
</comment>
<comment type="subunit">
    <text evidence="1">Homodecamer; pentamer of dimers.</text>
</comment>
<comment type="subcellular location">
    <subcellularLocation>
        <location evidence="1">Cytoplasm</location>
    </subcellularLocation>
</comment>
<comment type="similarity">
    <text evidence="1">Belongs to the PanB family.</text>
</comment>
<gene>
    <name evidence="1" type="primary">panB</name>
    <name type="ordered locus">BCA_1598</name>
</gene>
<sequence length="279" mass="30535">MKTKTDFLKMKEQGEPITMLTAYDYPSAKLAEEAEVDMILVGDSLGMVVLGYDSTVPVTVEDMIHHTKAVRRGAKETFIVTDMPFMSYHVSLQDTMVNARRIVQESGAHALKVEGAGEVISTIHYLTNAGIPVVAHLGLTPQSVGVLGGYKVQGKDAESAKKLIEDAKKCEEAGAIALVLECVPMQLAELISEQLTIPTIGIGAGQKVDGQVLVYHDLISYGVNRVPKFVKQYTSVQEEIVRGISQYVAEVKTRQFPEEKHSFTMKEEECLALYGGKQS</sequence>
<feature type="chain" id="PRO_1000123370" description="3-methyl-2-oxobutanoate hydroxymethyltransferase">
    <location>
        <begin position="1"/>
        <end position="279"/>
    </location>
</feature>
<feature type="active site" description="Proton acceptor" evidence="1">
    <location>
        <position position="181"/>
    </location>
</feature>
<feature type="binding site" evidence="1">
    <location>
        <begin position="43"/>
        <end position="44"/>
    </location>
    <ligand>
        <name>3-methyl-2-oxobutanoate</name>
        <dbReference type="ChEBI" id="CHEBI:11851"/>
    </ligand>
</feature>
<feature type="binding site" evidence="1">
    <location>
        <position position="43"/>
    </location>
    <ligand>
        <name>Mg(2+)</name>
        <dbReference type="ChEBI" id="CHEBI:18420"/>
    </ligand>
</feature>
<feature type="binding site" evidence="1">
    <location>
        <position position="82"/>
    </location>
    <ligand>
        <name>3-methyl-2-oxobutanoate</name>
        <dbReference type="ChEBI" id="CHEBI:11851"/>
    </ligand>
</feature>
<feature type="binding site" evidence="1">
    <location>
        <position position="82"/>
    </location>
    <ligand>
        <name>Mg(2+)</name>
        <dbReference type="ChEBI" id="CHEBI:18420"/>
    </ligand>
</feature>
<feature type="binding site" evidence="1">
    <location>
        <position position="112"/>
    </location>
    <ligand>
        <name>3-methyl-2-oxobutanoate</name>
        <dbReference type="ChEBI" id="CHEBI:11851"/>
    </ligand>
</feature>
<feature type="binding site" evidence="1">
    <location>
        <position position="114"/>
    </location>
    <ligand>
        <name>Mg(2+)</name>
        <dbReference type="ChEBI" id="CHEBI:18420"/>
    </ligand>
</feature>
<reference key="1">
    <citation type="submission" date="2009-02" db="EMBL/GenBank/DDBJ databases">
        <title>Genome sequence of Bacillus cereus 03BB102.</title>
        <authorList>
            <person name="Dodson R.J."/>
            <person name="Jackson P."/>
            <person name="Munk A.C."/>
            <person name="Brettin T."/>
            <person name="Bruce D."/>
            <person name="Detter C."/>
            <person name="Tapia R."/>
            <person name="Han C."/>
            <person name="Sutton G."/>
            <person name="Sims D."/>
        </authorList>
    </citation>
    <scope>NUCLEOTIDE SEQUENCE [LARGE SCALE GENOMIC DNA]</scope>
    <source>
        <strain>03BB102</strain>
    </source>
</reference>
<keyword id="KW-0963">Cytoplasm</keyword>
<keyword id="KW-0460">Magnesium</keyword>
<keyword id="KW-0479">Metal-binding</keyword>
<keyword id="KW-0566">Pantothenate biosynthesis</keyword>
<keyword id="KW-0808">Transferase</keyword>
<evidence type="ECO:0000255" key="1">
    <source>
        <dbReference type="HAMAP-Rule" id="MF_00156"/>
    </source>
</evidence>